<evidence type="ECO:0000255" key="1">
    <source>
        <dbReference type="HAMAP-Rule" id="MF_00251"/>
    </source>
</evidence>
<evidence type="ECO:0000305" key="2"/>
<keyword id="KW-0687">Ribonucleoprotein</keyword>
<keyword id="KW-0689">Ribosomal protein</keyword>
<name>RL36_BORAP</name>
<dbReference type="EMBL" id="CP000395">
    <property type="protein sequence ID" value="ABH01770.1"/>
    <property type="molecule type" value="Genomic_DNA"/>
</dbReference>
<dbReference type="EMBL" id="CP002933">
    <property type="protein sequence ID" value="AEL69723.1"/>
    <property type="molecule type" value="Genomic_DNA"/>
</dbReference>
<dbReference type="RefSeq" id="WP_004790059.1">
    <property type="nucleotide sequence ID" value="NZ_CP160066.1"/>
</dbReference>
<dbReference type="SMR" id="Q0SN08"/>
<dbReference type="STRING" id="29518.BLA32_01765"/>
<dbReference type="GeneID" id="83865974"/>
<dbReference type="KEGG" id="baf:BAPKO_0527"/>
<dbReference type="KEGG" id="bafz:BafPKo_0515"/>
<dbReference type="PATRIC" id="fig|390236.22.peg.496"/>
<dbReference type="eggNOG" id="COG0257">
    <property type="taxonomic scope" value="Bacteria"/>
</dbReference>
<dbReference type="HOGENOM" id="CLU_135723_6_2_12"/>
<dbReference type="OrthoDB" id="9802520at2"/>
<dbReference type="Proteomes" id="UP000005216">
    <property type="component" value="Chromosome"/>
</dbReference>
<dbReference type="GO" id="GO:0005737">
    <property type="term" value="C:cytoplasm"/>
    <property type="evidence" value="ECO:0007669"/>
    <property type="project" value="UniProtKB-ARBA"/>
</dbReference>
<dbReference type="GO" id="GO:1990904">
    <property type="term" value="C:ribonucleoprotein complex"/>
    <property type="evidence" value="ECO:0007669"/>
    <property type="project" value="UniProtKB-KW"/>
</dbReference>
<dbReference type="GO" id="GO:0005840">
    <property type="term" value="C:ribosome"/>
    <property type="evidence" value="ECO:0007669"/>
    <property type="project" value="UniProtKB-KW"/>
</dbReference>
<dbReference type="GO" id="GO:0003735">
    <property type="term" value="F:structural constituent of ribosome"/>
    <property type="evidence" value="ECO:0007669"/>
    <property type="project" value="InterPro"/>
</dbReference>
<dbReference type="GO" id="GO:0006412">
    <property type="term" value="P:translation"/>
    <property type="evidence" value="ECO:0007669"/>
    <property type="project" value="UniProtKB-UniRule"/>
</dbReference>
<dbReference type="HAMAP" id="MF_00251">
    <property type="entry name" value="Ribosomal_bL36"/>
    <property type="match status" value="1"/>
</dbReference>
<dbReference type="InterPro" id="IPR000473">
    <property type="entry name" value="Ribosomal_bL36"/>
</dbReference>
<dbReference type="InterPro" id="IPR035977">
    <property type="entry name" value="Ribosomal_bL36_sp"/>
</dbReference>
<dbReference type="NCBIfam" id="TIGR01022">
    <property type="entry name" value="rpmJ_bact"/>
    <property type="match status" value="1"/>
</dbReference>
<dbReference type="PANTHER" id="PTHR42888">
    <property type="entry name" value="50S RIBOSOMAL PROTEIN L36, CHLOROPLASTIC"/>
    <property type="match status" value="1"/>
</dbReference>
<dbReference type="PANTHER" id="PTHR42888:SF1">
    <property type="entry name" value="LARGE RIBOSOMAL SUBUNIT PROTEIN BL36C"/>
    <property type="match status" value="1"/>
</dbReference>
<dbReference type="Pfam" id="PF00444">
    <property type="entry name" value="Ribosomal_L36"/>
    <property type="match status" value="1"/>
</dbReference>
<dbReference type="SUPFAM" id="SSF57840">
    <property type="entry name" value="Ribosomal protein L36"/>
    <property type="match status" value="1"/>
</dbReference>
<dbReference type="PROSITE" id="PS00828">
    <property type="entry name" value="RIBOSOMAL_L36"/>
    <property type="match status" value="1"/>
</dbReference>
<sequence length="37" mass="4376">MKVRASVKPICEKCKVIKRKGVLRIICDNLKHKQRQK</sequence>
<reference key="1">
    <citation type="journal article" date="2006" name="BMC Genomics">
        <title>Comparative genome analysis: selection pressure on the Borrelia vls cassettes is essential for infectivity.</title>
        <authorList>
            <person name="Gloeckner G."/>
            <person name="Schulte-Spechtel U."/>
            <person name="Schilhabel M."/>
            <person name="Felder M."/>
            <person name="Suehnel J."/>
            <person name="Wilske B."/>
            <person name="Platzer M."/>
        </authorList>
    </citation>
    <scope>NUCLEOTIDE SEQUENCE [LARGE SCALE GENOMIC DNA]</scope>
    <source>
        <strain>PKo</strain>
    </source>
</reference>
<reference key="2">
    <citation type="journal article" date="2011" name="J. Bacteriol.">
        <title>Whole-genome sequences of two Borrelia afzelii and two Borrelia garinii Lyme disease agent isolates.</title>
        <authorList>
            <person name="Casjens S.R."/>
            <person name="Mongodin E.F."/>
            <person name="Qiu W.G."/>
            <person name="Dunn J.J."/>
            <person name="Luft B.J."/>
            <person name="Fraser-Liggett C.M."/>
            <person name="Schutzer S.E."/>
        </authorList>
    </citation>
    <scope>NUCLEOTIDE SEQUENCE [LARGE SCALE GENOMIC DNA]</scope>
    <source>
        <strain>PKo</strain>
    </source>
</reference>
<gene>
    <name evidence="1" type="primary">rpmJ</name>
    <name type="ordered locus">BAPKO_0527</name>
    <name type="ordered locus">BafPKo_0515</name>
</gene>
<protein>
    <recommendedName>
        <fullName evidence="1">Large ribosomal subunit protein bL36</fullName>
    </recommendedName>
    <alternativeName>
        <fullName evidence="2">50S ribosomal protein L36</fullName>
    </alternativeName>
</protein>
<organism>
    <name type="scientific">Borreliella afzelii (strain PKo)</name>
    <name type="common">Borrelia afzelii</name>
    <dbReference type="NCBI Taxonomy" id="390236"/>
    <lineage>
        <taxon>Bacteria</taxon>
        <taxon>Pseudomonadati</taxon>
        <taxon>Spirochaetota</taxon>
        <taxon>Spirochaetia</taxon>
        <taxon>Spirochaetales</taxon>
        <taxon>Borreliaceae</taxon>
        <taxon>Borreliella</taxon>
    </lineage>
</organism>
<accession>Q0SN08</accession>
<accession>G0ISE2</accession>
<feature type="chain" id="PRO_0000302163" description="Large ribosomal subunit protein bL36">
    <location>
        <begin position="1"/>
        <end position="37"/>
    </location>
</feature>
<proteinExistence type="inferred from homology"/>
<comment type="similarity">
    <text evidence="1">Belongs to the bacterial ribosomal protein bL36 family.</text>
</comment>